<keyword id="KW-0067">ATP-binding</keyword>
<keyword id="KW-0963">Cytoplasm</keyword>
<keyword id="KW-0418">Kinase</keyword>
<keyword id="KW-0460">Magnesium</keyword>
<keyword id="KW-0479">Metal-binding</keyword>
<keyword id="KW-0546">Nucleotide metabolism</keyword>
<keyword id="KW-0547">Nucleotide-binding</keyword>
<keyword id="KW-0597">Phosphoprotein</keyword>
<keyword id="KW-1185">Reference proteome</keyword>
<keyword id="KW-0808">Transferase</keyword>
<name>NDK_ECOL6</name>
<accession>Q8FF53</accession>
<dbReference type="EC" id="2.7.4.6" evidence="2"/>
<dbReference type="EMBL" id="AE014075">
    <property type="protein sequence ID" value="AAN81491.1"/>
    <property type="molecule type" value="Genomic_DNA"/>
</dbReference>
<dbReference type="RefSeq" id="WP_000963841.1">
    <property type="nucleotide sequence ID" value="NZ_CP051263.1"/>
</dbReference>
<dbReference type="SMR" id="Q8FF53"/>
<dbReference type="STRING" id="199310.c3041"/>
<dbReference type="GeneID" id="86947407"/>
<dbReference type="KEGG" id="ecc:c3041"/>
<dbReference type="eggNOG" id="COG0105">
    <property type="taxonomic scope" value="Bacteria"/>
</dbReference>
<dbReference type="HOGENOM" id="CLU_060216_8_1_6"/>
<dbReference type="BioCyc" id="ECOL199310:C3041-MONOMER"/>
<dbReference type="Proteomes" id="UP000001410">
    <property type="component" value="Chromosome"/>
</dbReference>
<dbReference type="GO" id="GO:0005737">
    <property type="term" value="C:cytoplasm"/>
    <property type="evidence" value="ECO:0007669"/>
    <property type="project" value="UniProtKB-SubCell"/>
</dbReference>
<dbReference type="GO" id="GO:0005524">
    <property type="term" value="F:ATP binding"/>
    <property type="evidence" value="ECO:0007669"/>
    <property type="project" value="UniProtKB-UniRule"/>
</dbReference>
<dbReference type="GO" id="GO:0046872">
    <property type="term" value="F:metal ion binding"/>
    <property type="evidence" value="ECO:0007669"/>
    <property type="project" value="UniProtKB-KW"/>
</dbReference>
<dbReference type="GO" id="GO:0004550">
    <property type="term" value="F:nucleoside diphosphate kinase activity"/>
    <property type="evidence" value="ECO:0007669"/>
    <property type="project" value="UniProtKB-UniRule"/>
</dbReference>
<dbReference type="GO" id="GO:0006241">
    <property type="term" value="P:CTP biosynthetic process"/>
    <property type="evidence" value="ECO:0007669"/>
    <property type="project" value="UniProtKB-UniRule"/>
</dbReference>
<dbReference type="GO" id="GO:0006183">
    <property type="term" value="P:GTP biosynthetic process"/>
    <property type="evidence" value="ECO:0007669"/>
    <property type="project" value="UniProtKB-UniRule"/>
</dbReference>
<dbReference type="GO" id="GO:0006228">
    <property type="term" value="P:UTP biosynthetic process"/>
    <property type="evidence" value="ECO:0007669"/>
    <property type="project" value="UniProtKB-UniRule"/>
</dbReference>
<dbReference type="CDD" id="cd04413">
    <property type="entry name" value="NDPk_I"/>
    <property type="match status" value="1"/>
</dbReference>
<dbReference type="FunFam" id="3.30.70.141:FF:000001">
    <property type="entry name" value="Nucleoside diphosphate kinase"/>
    <property type="match status" value="1"/>
</dbReference>
<dbReference type="Gene3D" id="3.30.70.141">
    <property type="entry name" value="Nucleoside diphosphate kinase-like domain"/>
    <property type="match status" value="1"/>
</dbReference>
<dbReference type="HAMAP" id="MF_00451">
    <property type="entry name" value="NDP_kinase"/>
    <property type="match status" value="1"/>
</dbReference>
<dbReference type="InterPro" id="IPR034907">
    <property type="entry name" value="NDK-like_dom"/>
</dbReference>
<dbReference type="InterPro" id="IPR036850">
    <property type="entry name" value="NDK-like_dom_sf"/>
</dbReference>
<dbReference type="InterPro" id="IPR001564">
    <property type="entry name" value="Nucleoside_diP_kinase"/>
</dbReference>
<dbReference type="InterPro" id="IPR023005">
    <property type="entry name" value="Nucleoside_diP_kinase_AS"/>
</dbReference>
<dbReference type="NCBIfam" id="NF001908">
    <property type="entry name" value="PRK00668.1"/>
    <property type="match status" value="1"/>
</dbReference>
<dbReference type="PANTHER" id="PTHR46161">
    <property type="entry name" value="NUCLEOSIDE DIPHOSPHATE KINASE"/>
    <property type="match status" value="1"/>
</dbReference>
<dbReference type="PANTHER" id="PTHR46161:SF3">
    <property type="entry name" value="NUCLEOSIDE DIPHOSPHATE KINASE DDB_G0292928-RELATED"/>
    <property type="match status" value="1"/>
</dbReference>
<dbReference type="Pfam" id="PF00334">
    <property type="entry name" value="NDK"/>
    <property type="match status" value="1"/>
</dbReference>
<dbReference type="PRINTS" id="PR01243">
    <property type="entry name" value="NUCDPKINASE"/>
</dbReference>
<dbReference type="SMART" id="SM00562">
    <property type="entry name" value="NDK"/>
    <property type="match status" value="1"/>
</dbReference>
<dbReference type="SUPFAM" id="SSF54919">
    <property type="entry name" value="Nucleoside diphosphate kinase, NDK"/>
    <property type="match status" value="1"/>
</dbReference>
<dbReference type="PROSITE" id="PS00469">
    <property type="entry name" value="NDPK"/>
    <property type="match status" value="1"/>
</dbReference>
<dbReference type="PROSITE" id="PS51374">
    <property type="entry name" value="NDPK_LIKE"/>
    <property type="match status" value="1"/>
</dbReference>
<evidence type="ECO:0000250" key="1"/>
<evidence type="ECO:0000255" key="2">
    <source>
        <dbReference type="HAMAP-Rule" id="MF_00451"/>
    </source>
</evidence>
<reference key="1">
    <citation type="journal article" date="2002" name="Proc. Natl. Acad. Sci. U.S.A.">
        <title>Extensive mosaic structure revealed by the complete genome sequence of uropathogenic Escherichia coli.</title>
        <authorList>
            <person name="Welch R.A."/>
            <person name="Burland V."/>
            <person name="Plunkett G. III"/>
            <person name="Redford P."/>
            <person name="Roesch P."/>
            <person name="Rasko D."/>
            <person name="Buckles E.L."/>
            <person name="Liou S.-R."/>
            <person name="Boutin A."/>
            <person name="Hackett J."/>
            <person name="Stroud D."/>
            <person name="Mayhew G.F."/>
            <person name="Rose D.J."/>
            <person name="Zhou S."/>
            <person name="Schwartz D.C."/>
            <person name="Perna N.T."/>
            <person name="Mobley H.L.T."/>
            <person name="Donnenberg M.S."/>
            <person name="Blattner F.R."/>
        </authorList>
    </citation>
    <scope>NUCLEOTIDE SEQUENCE [LARGE SCALE GENOMIC DNA]</scope>
    <source>
        <strain>CFT073 / ATCC 700928 / UPEC</strain>
    </source>
</reference>
<feature type="initiator methionine" description="Removed" evidence="1">
    <location>
        <position position="1"/>
    </location>
</feature>
<feature type="chain" id="PRO_0000136980" description="Nucleoside diphosphate kinase">
    <location>
        <begin position="2"/>
        <end position="143"/>
    </location>
</feature>
<feature type="active site" description="Pros-phosphohistidine intermediate" evidence="2">
    <location>
        <position position="117"/>
    </location>
</feature>
<feature type="binding site" evidence="2">
    <location>
        <position position="11"/>
    </location>
    <ligand>
        <name>ATP</name>
        <dbReference type="ChEBI" id="CHEBI:30616"/>
    </ligand>
</feature>
<feature type="binding site" evidence="2">
    <location>
        <position position="59"/>
    </location>
    <ligand>
        <name>ATP</name>
        <dbReference type="ChEBI" id="CHEBI:30616"/>
    </ligand>
</feature>
<feature type="binding site" evidence="2">
    <location>
        <position position="87"/>
    </location>
    <ligand>
        <name>ATP</name>
        <dbReference type="ChEBI" id="CHEBI:30616"/>
    </ligand>
</feature>
<feature type="binding site" evidence="2">
    <location>
        <position position="93"/>
    </location>
    <ligand>
        <name>ATP</name>
        <dbReference type="ChEBI" id="CHEBI:30616"/>
    </ligand>
</feature>
<feature type="binding site" evidence="2">
    <location>
        <position position="104"/>
    </location>
    <ligand>
        <name>ATP</name>
        <dbReference type="ChEBI" id="CHEBI:30616"/>
    </ligand>
</feature>
<feature type="binding site" evidence="2">
    <location>
        <position position="114"/>
    </location>
    <ligand>
        <name>ATP</name>
        <dbReference type="ChEBI" id="CHEBI:30616"/>
    </ligand>
</feature>
<protein>
    <recommendedName>
        <fullName evidence="2">Nucleoside diphosphate kinase</fullName>
        <shortName evidence="2">NDK</shortName>
        <shortName evidence="2">NDP kinase</shortName>
        <ecNumber evidence="2">2.7.4.6</ecNumber>
    </recommendedName>
    <alternativeName>
        <fullName evidence="2">Nucleoside-2-P kinase</fullName>
    </alternativeName>
</protein>
<organism>
    <name type="scientific">Escherichia coli O6:H1 (strain CFT073 / ATCC 700928 / UPEC)</name>
    <dbReference type="NCBI Taxonomy" id="199310"/>
    <lineage>
        <taxon>Bacteria</taxon>
        <taxon>Pseudomonadati</taxon>
        <taxon>Pseudomonadota</taxon>
        <taxon>Gammaproteobacteria</taxon>
        <taxon>Enterobacterales</taxon>
        <taxon>Enterobacteriaceae</taxon>
        <taxon>Escherichia</taxon>
    </lineage>
</organism>
<gene>
    <name evidence="2" type="primary">ndk</name>
    <name type="ordered locus">c3041</name>
</gene>
<sequence>MAIERTFSIIKPNAVAKNVIGSIFARFEAAGFKIVGTKMLHLTVEQARGFYAEHDGKPFFDGLVEFMTSGPIVVSVLEGENAVQRHRDLLGATNPANALAGTLRADYADSLTENGTHGSDSVESAAREIAYFFGEGEVCPRTR</sequence>
<proteinExistence type="inferred from homology"/>
<comment type="function">
    <text evidence="2">Major role in the synthesis of nucleoside triphosphates other than ATP. The ATP gamma phosphate is transferred to the NDP beta phosphate via a ping-pong mechanism, using a phosphorylated active-site intermediate.</text>
</comment>
<comment type="catalytic activity">
    <reaction evidence="2">
        <text>a 2'-deoxyribonucleoside 5'-diphosphate + ATP = a 2'-deoxyribonucleoside 5'-triphosphate + ADP</text>
        <dbReference type="Rhea" id="RHEA:44640"/>
        <dbReference type="ChEBI" id="CHEBI:30616"/>
        <dbReference type="ChEBI" id="CHEBI:61560"/>
        <dbReference type="ChEBI" id="CHEBI:73316"/>
        <dbReference type="ChEBI" id="CHEBI:456216"/>
        <dbReference type="EC" id="2.7.4.6"/>
    </reaction>
</comment>
<comment type="catalytic activity">
    <reaction evidence="2">
        <text>a ribonucleoside 5'-diphosphate + ATP = a ribonucleoside 5'-triphosphate + ADP</text>
        <dbReference type="Rhea" id="RHEA:18113"/>
        <dbReference type="ChEBI" id="CHEBI:30616"/>
        <dbReference type="ChEBI" id="CHEBI:57930"/>
        <dbReference type="ChEBI" id="CHEBI:61557"/>
        <dbReference type="ChEBI" id="CHEBI:456216"/>
        <dbReference type="EC" id="2.7.4.6"/>
    </reaction>
</comment>
<comment type="cofactor">
    <cofactor evidence="2">
        <name>Mg(2+)</name>
        <dbReference type="ChEBI" id="CHEBI:18420"/>
    </cofactor>
</comment>
<comment type="subunit">
    <text evidence="2">Homotetramer.</text>
</comment>
<comment type="subcellular location">
    <subcellularLocation>
        <location evidence="2">Cytoplasm</location>
    </subcellularLocation>
</comment>
<comment type="similarity">
    <text evidence="2">Belongs to the NDK family.</text>
</comment>